<protein>
    <recommendedName>
        <fullName evidence="1">Large ribosomal subunit protein bL36</fullName>
    </recommendedName>
    <alternativeName>
        <fullName evidence="2">50S ribosomal protein L36</fullName>
    </alternativeName>
</protein>
<sequence length="37" mass="4304">MKVRASVKKICRNCKVVKRKGVIRVLCVEPKHKQRQG</sequence>
<organism>
    <name type="scientific">Colwellia psychrerythraea (strain 34H / ATCC BAA-681)</name>
    <name type="common">Vibrio psychroerythus</name>
    <dbReference type="NCBI Taxonomy" id="167879"/>
    <lineage>
        <taxon>Bacteria</taxon>
        <taxon>Pseudomonadati</taxon>
        <taxon>Pseudomonadota</taxon>
        <taxon>Gammaproteobacteria</taxon>
        <taxon>Alteromonadales</taxon>
        <taxon>Colwelliaceae</taxon>
        <taxon>Colwellia</taxon>
    </lineage>
</organism>
<accession>Q488Z2</accession>
<proteinExistence type="inferred from homology"/>
<evidence type="ECO:0000255" key="1">
    <source>
        <dbReference type="HAMAP-Rule" id="MF_00251"/>
    </source>
</evidence>
<evidence type="ECO:0000305" key="2"/>
<reference key="1">
    <citation type="journal article" date="2005" name="Proc. Natl. Acad. Sci. U.S.A.">
        <title>The psychrophilic lifestyle as revealed by the genome sequence of Colwellia psychrerythraea 34H through genomic and proteomic analyses.</title>
        <authorList>
            <person name="Methe B.A."/>
            <person name="Nelson K.E."/>
            <person name="Deming J.W."/>
            <person name="Momen B."/>
            <person name="Melamud E."/>
            <person name="Zhang X."/>
            <person name="Moult J."/>
            <person name="Madupu R."/>
            <person name="Nelson W.C."/>
            <person name="Dodson R.J."/>
            <person name="Brinkac L.M."/>
            <person name="Daugherty S.C."/>
            <person name="Durkin A.S."/>
            <person name="DeBoy R.T."/>
            <person name="Kolonay J.F."/>
            <person name="Sullivan S.A."/>
            <person name="Zhou L."/>
            <person name="Davidsen T.M."/>
            <person name="Wu M."/>
            <person name="Huston A.L."/>
            <person name="Lewis M."/>
            <person name="Weaver B."/>
            <person name="Weidman J.F."/>
            <person name="Khouri H."/>
            <person name="Utterback T.R."/>
            <person name="Feldblyum T.V."/>
            <person name="Fraser C.M."/>
        </authorList>
    </citation>
    <scope>NUCLEOTIDE SEQUENCE [LARGE SCALE GENOMIC DNA]</scope>
    <source>
        <strain>34H / ATCC BAA-681</strain>
    </source>
</reference>
<gene>
    <name evidence="1" type="primary">rpmJ</name>
    <name type="ordered locus">CPS_0622</name>
</gene>
<dbReference type="EMBL" id="CP000083">
    <property type="protein sequence ID" value="AAZ27117.1"/>
    <property type="molecule type" value="Genomic_DNA"/>
</dbReference>
<dbReference type="SMR" id="Q488Z2"/>
<dbReference type="STRING" id="167879.CPS_0622"/>
<dbReference type="KEGG" id="cps:CPS_0622"/>
<dbReference type="HOGENOM" id="CLU_135723_6_2_6"/>
<dbReference type="Proteomes" id="UP000000547">
    <property type="component" value="Chromosome"/>
</dbReference>
<dbReference type="GO" id="GO:0005737">
    <property type="term" value="C:cytoplasm"/>
    <property type="evidence" value="ECO:0007669"/>
    <property type="project" value="UniProtKB-ARBA"/>
</dbReference>
<dbReference type="GO" id="GO:1990904">
    <property type="term" value="C:ribonucleoprotein complex"/>
    <property type="evidence" value="ECO:0007669"/>
    <property type="project" value="UniProtKB-KW"/>
</dbReference>
<dbReference type="GO" id="GO:0005840">
    <property type="term" value="C:ribosome"/>
    <property type="evidence" value="ECO:0007669"/>
    <property type="project" value="UniProtKB-KW"/>
</dbReference>
<dbReference type="GO" id="GO:0003735">
    <property type="term" value="F:structural constituent of ribosome"/>
    <property type="evidence" value="ECO:0007669"/>
    <property type="project" value="InterPro"/>
</dbReference>
<dbReference type="GO" id="GO:0006412">
    <property type="term" value="P:translation"/>
    <property type="evidence" value="ECO:0007669"/>
    <property type="project" value="UniProtKB-UniRule"/>
</dbReference>
<dbReference type="HAMAP" id="MF_00251">
    <property type="entry name" value="Ribosomal_bL36"/>
    <property type="match status" value="1"/>
</dbReference>
<dbReference type="InterPro" id="IPR000473">
    <property type="entry name" value="Ribosomal_bL36"/>
</dbReference>
<dbReference type="InterPro" id="IPR035977">
    <property type="entry name" value="Ribosomal_bL36_sp"/>
</dbReference>
<dbReference type="NCBIfam" id="TIGR01022">
    <property type="entry name" value="rpmJ_bact"/>
    <property type="match status" value="1"/>
</dbReference>
<dbReference type="PANTHER" id="PTHR42888">
    <property type="entry name" value="50S RIBOSOMAL PROTEIN L36, CHLOROPLASTIC"/>
    <property type="match status" value="1"/>
</dbReference>
<dbReference type="PANTHER" id="PTHR42888:SF1">
    <property type="entry name" value="LARGE RIBOSOMAL SUBUNIT PROTEIN BL36C"/>
    <property type="match status" value="1"/>
</dbReference>
<dbReference type="Pfam" id="PF00444">
    <property type="entry name" value="Ribosomal_L36"/>
    <property type="match status" value="1"/>
</dbReference>
<dbReference type="SUPFAM" id="SSF57840">
    <property type="entry name" value="Ribosomal protein L36"/>
    <property type="match status" value="1"/>
</dbReference>
<dbReference type="PROSITE" id="PS00828">
    <property type="entry name" value="RIBOSOMAL_L36"/>
    <property type="match status" value="1"/>
</dbReference>
<name>RL36_COLP3</name>
<keyword id="KW-0687">Ribonucleoprotein</keyword>
<keyword id="KW-0689">Ribosomal protein</keyword>
<feature type="chain" id="PRO_0000302188" description="Large ribosomal subunit protein bL36">
    <location>
        <begin position="1"/>
        <end position="37"/>
    </location>
</feature>
<comment type="similarity">
    <text evidence="1">Belongs to the bacterial ribosomal protein bL36 family.</text>
</comment>